<gene>
    <name type="primary">tfa2</name>
    <name type="ORF">SPCC1672.08c</name>
</gene>
<sequence>MSSLSDQLSSFKKKVANQPIYAKPQPRQPASPTPTAYLNSNDGHSSAASSPGSYSLKKKRSKTSLVYSQPADSGVGTHYLSQLHYAVEYLKERNEPKTAEEIASYLSTPLTPMLLNLLKKNNRIYYDERNETFTFKPLHNIRSGAGLLAYLDSQKTHVGMSIKELRDGWPNVTVELEELEKQGEVLLLRTRKDGVPKMVWRNDKSCDCHVDKEFQQVWHEIPIPPTLDLASELGKYGLKPTSVDPSTVKRAGHNQTPKQKKPKTRRGKITNTHLNILRDYSSMKP</sequence>
<proteinExistence type="evidence at protein level"/>
<dbReference type="EMBL" id="AB176673">
    <property type="protein sequence ID" value="BAD74159.1"/>
    <property type="molecule type" value="mRNA"/>
</dbReference>
<dbReference type="EMBL" id="CU329672">
    <property type="protein sequence ID" value="CAA20446.1"/>
    <property type="molecule type" value="Genomic_DNA"/>
</dbReference>
<dbReference type="EMBL" id="AB000475">
    <property type="protein sequence ID" value="BAA19123.1"/>
    <property type="molecule type" value="mRNA"/>
</dbReference>
<dbReference type="PIR" id="T41052">
    <property type="entry name" value="T41052"/>
</dbReference>
<dbReference type="RefSeq" id="NP_587879.1">
    <property type="nucleotide sequence ID" value="NM_001022871.2"/>
</dbReference>
<dbReference type="SMR" id="P79011"/>
<dbReference type="BioGRID" id="275806">
    <property type="interactions" value="18"/>
</dbReference>
<dbReference type="FunCoup" id="P79011">
    <property type="interactions" value="467"/>
</dbReference>
<dbReference type="IntAct" id="P79011">
    <property type="interactions" value="1"/>
</dbReference>
<dbReference type="STRING" id="284812.P79011"/>
<dbReference type="iPTMnet" id="P79011"/>
<dbReference type="PaxDb" id="4896-SPCC1672.08c.1"/>
<dbReference type="EnsemblFungi" id="SPCC1672.08c.1">
    <property type="protein sequence ID" value="SPCC1672.08c.1:pep"/>
    <property type="gene ID" value="SPCC1672.08c"/>
</dbReference>
<dbReference type="GeneID" id="2539236"/>
<dbReference type="KEGG" id="spo:2539236"/>
<dbReference type="PomBase" id="SPCC1672.08c">
    <property type="gene designation" value="tfa2"/>
</dbReference>
<dbReference type="VEuPathDB" id="FungiDB:SPCC1672.08c"/>
<dbReference type="eggNOG" id="KOG3095">
    <property type="taxonomic scope" value="Eukaryota"/>
</dbReference>
<dbReference type="HOGENOM" id="CLU_056580_0_1_1"/>
<dbReference type="InParanoid" id="P79011"/>
<dbReference type="OMA" id="RTKKDNH"/>
<dbReference type="PhylomeDB" id="P79011"/>
<dbReference type="Reactome" id="R-SPO-674695">
    <property type="pathway name" value="RNA Polymerase II Pre-transcription Events"/>
</dbReference>
<dbReference type="Reactome" id="R-SPO-6807505">
    <property type="pathway name" value="RNA polymerase II transcribes snRNA genes"/>
</dbReference>
<dbReference type="Reactome" id="R-SPO-73776">
    <property type="pathway name" value="RNA Polymerase II Promoter Escape"/>
</dbReference>
<dbReference type="Reactome" id="R-SPO-73779">
    <property type="pathway name" value="RNA Polymerase II Transcription Pre-Initiation And Promoter Opening"/>
</dbReference>
<dbReference type="Reactome" id="R-SPO-75953">
    <property type="pathway name" value="RNA Polymerase II Transcription Initiation"/>
</dbReference>
<dbReference type="Reactome" id="R-SPO-76042">
    <property type="pathway name" value="RNA Polymerase II Transcription Initiation And Promoter Clearance"/>
</dbReference>
<dbReference type="PRO" id="PR:P79011"/>
<dbReference type="Proteomes" id="UP000002485">
    <property type="component" value="Chromosome III"/>
</dbReference>
<dbReference type="GO" id="GO:0005730">
    <property type="term" value="C:nucleolus"/>
    <property type="evidence" value="ECO:0007005"/>
    <property type="project" value="PomBase"/>
</dbReference>
<dbReference type="GO" id="GO:0005634">
    <property type="term" value="C:nucleus"/>
    <property type="evidence" value="ECO:0007005"/>
    <property type="project" value="PomBase"/>
</dbReference>
<dbReference type="GO" id="GO:0005673">
    <property type="term" value="C:transcription factor TFIIE complex"/>
    <property type="evidence" value="ECO:0000314"/>
    <property type="project" value="PomBase"/>
</dbReference>
<dbReference type="GO" id="GO:0003677">
    <property type="term" value="F:DNA binding"/>
    <property type="evidence" value="ECO:0007669"/>
    <property type="project" value="UniProtKB-KW"/>
</dbReference>
<dbReference type="GO" id="GO:0016251">
    <property type="term" value="F:RNA polymerase II general transcription initiation factor activity"/>
    <property type="evidence" value="ECO:0000314"/>
    <property type="project" value="PomBase"/>
</dbReference>
<dbReference type="GO" id="GO:0006367">
    <property type="term" value="P:transcription initiation at RNA polymerase II promoter"/>
    <property type="evidence" value="ECO:0000314"/>
    <property type="project" value="PomBase"/>
</dbReference>
<dbReference type="CDD" id="cd07977">
    <property type="entry name" value="TFIIE_beta_winged_helix"/>
    <property type="match status" value="1"/>
</dbReference>
<dbReference type="InterPro" id="IPR054600">
    <property type="entry name" value="TFA2_E-tether"/>
</dbReference>
<dbReference type="InterPro" id="IPR040501">
    <property type="entry name" value="TFA2_Winged_2"/>
</dbReference>
<dbReference type="InterPro" id="IPR016656">
    <property type="entry name" value="TFIIE-bsu"/>
</dbReference>
<dbReference type="InterPro" id="IPR003166">
    <property type="entry name" value="TFIIE_bsu_DNA-bd"/>
</dbReference>
<dbReference type="PANTHER" id="PTHR12716:SF8">
    <property type="entry name" value="TRANSCRIPTION INITIATION FACTOR IIE SUBUNIT BETA"/>
    <property type="match status" value="1"/>
</dbReference>
<dbReference type="PANTHER" id="PTHR12716">
    <property type="entry name" value="TRANSCRIPTION INITIATION FACTOR IIE, BETA SUBUNIT"/>
    <property type="match status" value="1"/>
</dbReference>
<dbReference type="Pfam" id="PF22254">
    <property type="entry name" value="TFA2_E-tether"/>
    <property type="match status" value="1"/>
</dbReference>
<dbReference type="Pfam" id="PF18121">
    <property type="entry name" value="TFA2_Winged_2"/>
    <property type="match status" value="1"/>
</dbReference>
<dbReference type="Pfam" id="PF02186">
    <property type="entry name" value="TFIIE_beta"/>
    <property type="match status" value="1"/>
</dbReference>
<dbReference type="PIRSF" id="PIRSF016398">
    <property type="entry name" value="TFIIE-beta"/>
    <property type="match status" value="1"/>
</dbReference>
<dbReference type="PROSITE" id="PS51351">
    <property type="entry name" value="TFIIE_BETA_C"/>
    <property type="match status" value="1"/>
</dbReference>
<feature type="chain" id="PRO_0000211229" description="Transcription initiation factor IIE subunit beta">
    <location>
        <begin position="1"/>
        <end position="285"/>
    </location>
</feature>
<feature type="DNA-binding region" description="TFIIE beta" evidence="2">
    <location>
        <begin position="67"/>
        <end position="142"/>
    </location>
</feature>
<feature type="region of interest" description="Disordered" evidence="3">
    <location>
        <begin position="1"/>
        <end position="56"/>
    </location>
</feature>
<feature type="region of interest" description="Disordered" evidence="3">
    <location>
        <begin position="240"/>
        <end position="272"/>
    </location>
</feature>
<feature type="compositionally biased region" description="Polar residues" evidence="3">
    <location>
        <begin position="1"/>
        <end position="10"/>
    </location>
</feature>
<feature type="compositionally biased region" description="Polar residues" evidence="3">
    <location>
        <begin position="33"/>
        <end position="44"/>
    </location>
</feature>
<feature type="compositionally biased region" description="Low complexity" evidence="3">
    <location>
        <begin position="45"/>
        <end position="55"/>
    </location>
</feature>
<feature type="compositionally biased region" description="Basic residues" evidence="3">
    <location>
        <begin position="258"/>
        <end position="268"/>
    </location>
</feature>
<feature type="sequence conflict" description="In Ref. 1; BAD74159." evidence="5" ref="1">
    <original>P</original>
    <variation>A</variation>
    <location>
        <position position="240"/>
    </location>
</feature>
<keyword id="KW-0238">DNA-binding</keyword>
<keyword id="KW-0539">Nucleus</keyword>
<keyword id="KW-1185">Reference proteome</keyword>
<keyword id="KW-0804">Transcription</keyword>
<keyword id="KW-0805">Transcription regulation</keyword>
<accession>P79011</accession>
<accession>Q5R228</accession>
<name>T2EB_SCHPO</name>
<evidence type="ECO:0000250" key="1"/>
<evidence type="ECO:0000255" key="2">
    <source>
        <dbReference type="PROSITE-ProRule" id="PRU00682"/>
    </source>
</evidence>
<evidence type="ECO:0000256" key="3">
    <source>
        <dbReference type="SAM" id="MobiDB-lite"/>
    </source>
</evidence>
<evidence type="ECO:0000269" key="4">
    <source>
    </source>
</evidence>
<evidence type="ECO:0000305" key="5"/>
<protein>
    <recommendedName>
        <fullName>Transcription initiation factor IIE subunit beta</fullName>
        <shortName>TFIIE-beta</shortName>
    </recommendedName>
</protein>
<organism>
    <name type="scientific">Schizosaccharomyces pombe (strain 972 / ATCC 24843)</name>
    <name type="common">Fission yeast</name>
    <dbReference type="NCBI Taxonomy" id="284812"/>
    <lineage>
        <taxon>Eukaryota</taxon>
        <taxon>Fungi</taxon>
        <taxon>Dikarya</taxon>
        <taxon>Ascomycota</taxon>
        <taxon>Taphrinomycotina</taxon>
        <taxon>Schizosaccharomycetes</taxon>
        <taxon>Schizosaccharomycetales</taxon>
        <taxon>Schizosaccharomycetaceae</taxon>
        <taxon>Schizosaccharomyces</taxon>
    </lineage>
</organism>
<reference key="1">
    <citation type="journal article" date="2005" name="Genes Cells">
        <title>Studies of Schizosaccharomyces pombe TFIIE indicate conformational and functional changes in RNA polymerase II at transcription initiation.</title>
        <authorList>
            <person name="Hayashi K."/>
            <person name="Watanabe T."/>
            <person name="Tanaka A."/>
            <person name="Furumoto T."/>
            <person name="Sato-Tsuchiya C."/>
            <person name="Kimura M."/>
            <person name="Yokoi M."/>
            <person name="Ishihama A."/>
            <person name="Hanaoka F."/>
            <person name="Ohkuma Y."/>
        </authorList>
    </citation>
    <scope>NUCLEOTIDE SEQUENCE [MRNA]</scope>
    <scope>SUBUNIT</scope>
    <source>
        <strain>972 / ATCC 24843</strain>
    </source>
</reference>
<reference key="2">
    <citation type="journal article" date="2002" name="Nature">
        <title>The genome sequence of Schizosaccharomyces pombe.</title>
        <authorList>
            <person name="Wood V."/>
            <person name="Gwilliam R."/>
            <person name="Rajandream M.A."/>
            <person name="Lyne M.H."/>
            <person name="Lyne R."/>
            <person name="Stewart A."/>
            <person name="Sgouros J.G."/>
            <person name="Peat N."/>
            <person name="Hayles J."/>
            <person name="Baker S.G."/>
            <person name="Basham D."/>
            <person name="Bowman S."/>
            <person name="Brooks K."/>
            <person name="Brown D."/>
            <person name="Brown S."/>
            <person name="Chillingworth T."/>
            <person name="Churcher C.M."/>
            <person name="Collins M."/>
            <person name="Connor R."/>
            <person name="Cronin A."/>
            <person name="Davis P."/>
            <person name="Feltwell T."/>
            <person name="Fraser A."/>
            <person name="Gentles S."/>
            <person name="Goble A."/>
            <person name="Hamlin N."/>
            <person name="Harris D.E."/>
            <person name="Hidalgo J."/>
            <person name="Hodgson G."/>
            <person name="Holroyd S."/>
            <person name="Hornsby T."/>
            <person name="Howarth S."/>
            <person name="Huckle E.J."/>
            <person name="Hunt S."/>
            <person name="Jagels K."/>
            <person name="James K.D."/>
            <person name="Jones L."/>
            <person name="Jones M."/>
            <person name="Leather S."/>
            <person name="McDonald S."/>
            <person name="McLean J."/>
            <person name="Mooney P."/>
            <person name="Moule S."/>
            <person name="Mungall K.L."/>
            <person name="Murphy L.D."/>
            <person name="Niblett D."/>
            <person name="Odell C."/>
            <person name="Oliver K."/>
            <person name="O'Neil S."/>
            <person name="Pearson D."/>
            <person name="Quail M.A."/>
            <person name="Rabbinowitsch E."/>
            <person name="Rutherford K.M."/>
            <person name="Rutter S."/>
            <person name="Saunders D."/>
            <person name="Seeger K."/>
            <person name="Sharp S."/>
            <person name="Skelton J."/>
            <person name="Simmonds M.N."/>
            <person name="Squares R."/>
            <person name="Squares S."/>
            <person name="Stevens K."/>
            <person name="Taylor K."/>
            <person name="Taylor R.G."/>
            <person name="Tivey A."/>
            <person name="Walsh S.V."/>
            <person name="Warren T."/>
            <person name="Whitehead S."/>
            <person name="Woodward J.R."/>
            <person name="Volckaert G."/>
            <person name="Aert R."/>
            <person name="Robben J."/>
            <person name="Grymonprez B."/>
            <person name="Weltjens I."/>
            <person name="Vanstreels E."/>
            <person name="Rieger M."/>
            <person name="Schaefer M."/>
            <person name="Mueller-Auer S."/>
            <person name="Gabel C."/>
            <person name="Fuchs M."/>
            <person name="Duesterhoeft A."/>
            <person name="Fritzc C."/>
            <person name="Holzer E."/>
            <person name="Moestl D."/>
            <person name="Hilbert H."/>
            <person name="Borzym K."/>
            <person name="Langer I."/>
            <person name="Beck A."/>
            <person name="Lehrach H."/>
            <person name="Reinhardt R."/>
            <person name="Pohl T.M."/>
            <person name="Eger P."/>
            <person name="Zimmermann W."/>
            <person name="Wedler H."/>
            <person name="Wambutt R."/>
            <person name="Purnelle B."/>
            <person name="Goffeau A."/>
            <person name="Cadieu E."/>
            <person name="Dreano S."/>
            <person name="Gloux S."/>
            <person name="Lelaure V."/>
            <person name="Mottier S."/>
            <person name="Galibert F."/>
            <person name="Aves S.J."/>
            <person name="Xiang Z."/>
            <person name="Hunt C."/>
            <person name="Moore K."/>
            <person name="Hurst S.M."/>
            <person name="Lucas M."/>
            <person name="Rochet M."/>
            <person name="Gaillardin C."/>
            <person name="Tallada V.A."/>
            <person name="Garzon A."/>
            <person name="Thode G."/>
            <person name="Daga R.R."/>
            <person name="Cruzado L."/>
            <person name="Jimenez J."/>
            <person name="Sanchez M."/>
            <person name="del Rey F."/>
            <person name="Benito J."/>
            <person name="Dominguez A."/>
            <person name="Revuelta J.L."/>
            <person name="Moreno S."/>
            <person name="Armstrong J."/>
            <person name="Forsburg S.L."/>
            <person name="Cerutti L."/>
            <person name="Lowe T."/>
            <person name="McCombie W.R."/>
            <person name="Paulsen I."/>
            <person name="Potashkin J."/>
            <person name="Shpakovski G.V."/>
            <person name="Ussery D."/>
            <person name="Barrell B.G."/>
            <person name="Nurse P."/>
        </authorList>
    </citation>
    <scope>NUCLEOTIDE SEQUENCE [LARGE SCALE GENOMIC DNA]</scope>
    <source>
        <strain>972 / ATCC 24843</strain>
    </source>
</reference>
<reference key="3">
    <citation type="submission" date="1997-01" db="EMBL/GenBank/DDBJ databases">
        <title>S.pombe TFA2 homolog.</title>
        <authorList>
            <person name="Kawamukai M."/>
        </authorList>
    </citation>
    <scope>NUCLEOTIDE SEQUENCE [MRNA] OF 62-285</scope>
</reference>
<comment type="function">
    <text evidence="1">Recruits TFIIH to the initiation complex and stimulates the RNA polymerase II C-terminal domain kinase and DNA-dependent ATPase activities of TFIIH. Both TFIIH and TFIIE are required for promoter clearance by RNA polymerase (By similarity).</text>
</comment>
<comment type="subunit">
    <text evidence="4">TFIIE is a tetramer of two alpha (tfa1) and two beta (tfa2) subunits. TFIIE associates with RNA polymerase II via the beta subunit.</text>
</comment>
<comment type="subcellular location">
    <subcellularLocation>
        <location evidence="5">Nucleus</location>
    </subcellularLocation>
</comment>
<comment type="similarity">
    <text evidence="2">Belongs to the TFIIE beta subunit family.</text>
</comment>